<proteinExistence type="inferred from homology"/>
<organismHost>
    <name type="scientific">Homo sapiens</name>
    <name type="common">Human</name>
    <dbReference type="NCBI Taxonomy" id="9606"/>
</organismHost>
<comment type="function">
    <text evidence="1 2 3">Eukaryotic-type DNA polymerase involved in viral genomic replication. DNA synthesis is protein primed, and acts in a strand displacement replication. Assembles in complex with viral pTP, DBP, host NFIA and host POU2F1/OCT1 on viral origin of replication. The polymerase covalently transfers dCMP onto pTP, thereby initiating complementary strand synthesis.</text>
</comment>
<comment type="catalytic activity">
    <reaction evidence="3">
        <text>DNA(n) + a 2'-deoxyribonucleoside 5'-triphosphate = DNA(n+1) + diphosphate</text>
        <dbReference type="Rhea" id="RHEA:22508"/>
        <dbReference type="Rhea" id="RHEA-COMP:17339"/>
        <dbReference type="Rhea" id="RHEA-COMP:17340"/>
        <dbReference type="ChEBI" id="CHEBI:33019"/>
        <dbReference type="ChEBI" id="CHEBI:61560"/>
        <dbReference type="ChEBI" id="CHEBI:173112"/>
        <dbReference type="EC" id="2.7.7.7"/>
    </reaction>
</comment>
<comment type="subunit">
    <text evidence="2 3">Heterodimer with the terminal protein; this heterodimer binds to bp 9 to 18 of the genome. Forms a complex with viral pTP, DBP and hosts NFIA and POU2F1/OCT1 for initiation of replication.</text>
</comment>
<comment type="subcellular location">
    <subcellularLocation>
        <location evidence="1 3">Host nucleus</location>
    </subcellularLocation>
</comment>
<comment type="miscellaneous">
    <text evidence="3">This DNA polymerase requires a protein as a primer.</text>
</comment>
<comment type="similarity">
    <text evidence="3 5">Belongs to the DNA polymerase type-B family.</text>
</comment>
<dbReference type="EC" id="2.7.7.7" evidence="3"/>
<dbReference type="EMBL" id="X74672">
    <property type="protein sequence ID" value="CAA52739.1"/>
    <property type="molecule type" value="Genomic_DNA"/>
</dbReference>
<dbReference type="EMBL" id="X74508">
    <property type="protein sequence ID" value="CAA52739.1"/>
    <property type="status" value="JOINED"/>
    <property type="molecule type" value="Genomic_DNA"/>
</dbReference>
<dbReference type="GO" id="GO:0042025">
    <property type="term" value="C:host cell nucleus"/>
    <property type="evidence" value="ECO:0007669"/>
    <property type="project" value="UniProtKB-SubCell"/>
</dbReference>
<dbReference type="GO" id="GO:0008408">
    <property type="term" value="F:3'-5' exonuclease activity"/>
    <property type="evidence" value="ECO:0007669"/>
    <property type="project" value="UniProtKB-UniRule"/>
</dbReference>
<dbReference type="GO" id="GO:0003677">
    <property type="term" value="F:DNA binding"/>
    <property type="evidence" value="ECO:0007669"/>
    <property type="project" value="UniProtKB-UniRule"/>
</dbReference>
<dbReference type="GO" id="GO:0003887">
    <property type="term" value="F:DNA-directed DNA polymerase activity"/>
    <property type="evidence" value="ECO:0007669"/>
    <property type="project" value="UniProtKB-UniRule"/>
</dbReference>
<dbReference type="GO" id="GO:0000166">
    <property type="term" value="F:nucleotide binding"/>
    <property type="evidence" value="ECO:0007669"/>
    <property type="project" value="UniProtKB-UniRule"/>
</dbReference>
<dbReference type="GO" id="GO:0006261">
    <property type="term" value="P:DNA-templated DNA replication"/>
    <property type="evidence" value="ECO:0007669"/>
    <property type="project" value="UniProtKB-UniRule"/>
</dbReference>
<dbReference type="GO" id="GO:0039693">
    <property type="term" value="P:viral DNA genome replication"/>
    <property type="evidence" value="ECO:0007669"/>
    <property type="project" value="UniProtKB-UniRule"/>
</dbReference>
<dbReference type="Gene3D" id="1.10.287.690">
    <property type="entry name" value="Helix hairpin bin"/>
    <property type="match status" value="1"/>
</dbReference>
<dbReference type="Gene3D" id="3.90.1600.10">
    <property type="entry name" value="Palm domain of DNA polymerase"/>
    <property type="match status" value="1"/>
</dbReference>
<dbReference type="Gene3D" id="3.30.1770.10">
    <property type="entry name" value="TPR 1 domain of DNA polymerase"/>
    <property type="match status" value="1"/>
</dbReference>
<dbReference type="HAMAP" id="MF_04055">
    <property type="entry name" value="ADV_DPOL"/>
    <property type="match status" value="1"/>
</dbReference>
<dbReference type="InterPro" id="IPR006172">
    <property type="entry name" value="DNA-dir_DNA_pol_B"/>
</dbReference>
<dbReference type="InterPro" id="IPR014382">
    <property type="entry name" value="DNA-dir_DNA_pol_B_adenovir"/>
</dbReference>
<dbReference type="InterPro" id="IPR017964">
    <property type="entry name" value="DNA-dir_DNA_pol_B_CS"/>
</dbReference>
<dbReference type="InterPro" id="IPR004868">
    <property type="entry name" value="DNA-dir_DNA_pol_B_mt/vir"/>
</dbReference>
<dbReference type="InterPro" id="IPR043502">
    <property type="entry name" value="DNA/RNA_pol_sf"/>
</dbReference>
<dbReference type="InterPro" id="IPR023211">
    <property type="entry name" value="DNA_pol_palm_dom_sf"/>
</dbReference>
<dbReference type="InterPro" id="IPR012337">
    <property type="entry name" value="RNaseH-like_sf"/>
</dbReference>
<dbReference type="Pfam" id="PF03175">
    <property type="entry name" value="DNA_pol_B_2"/>
    <property type="match status" value="1"/>
</dbReference>
<dbReference type="PIRSF" id="PIRSF000788">
    <property type="entry name" value="DPol_ADV"/>
    <property type="match status" value="1"/>
</dbReference>
<dbReference type="PRINTS" id="PR00106">
    <property type="entry name" value="DNAPOLB"/>
</dbReference>
<dbReference type="SMART" id="SM00486">
    <property type="entry name" value="POLBc"/>
    <property type="match status" value="1"/>
</dbReference>
<dbReference type="SUPFAM" id="SSF56672">
    <property type="entry name" value="DNA/RNA polymerases"/>
    <property type="match status" value="1"/>
</dbReference>
<dbReference type="SUPFAM" id="SSF53098">
    <property type="entry name" value="Ribonuclease H-like"/>
    <property type="match status" value="1"/>
</dbReference>
<dbReference type="PROSITE" id="PS00116">
    <property type="entry name" value="DNA_POLYMERASE_B"/>
    <property type="match status" value="1"/>
</dbReference>
<keyword id="KW-0235">DNA replication</keyword>
<keyword id="KW-0238">DNA-binding</keyword>
<keyword id="KW-0239">DNA-directed DNA polymerase</keyword>
<keyword id="KW-1048">Host nucleus</keyword>
<keyword id="KW-0548">Nucleotidyltransferase</keyword>
<keyword id="KW-0808">Transferase</keyword>
<keyword id="KW-1194">Viral DNA replication</keyword>
<feature type="chain" id="PRO_0000046493" description="DNA polymerase">
    <location>
        <begin position="1"/>
        <end position="1193"/>
    </location>
</feature>
<feature type="region of interest" description="Disordered" evidence="4">
    <location>
        <begin position="1"/>
        <end position="88"/>
    </location>
</feature>
<feature type="compositionally biased region" description="Low complexity" evidence="4">
    <location>
        <begin position="48"/>
        <end position="68"/>
    </location>
</feature>
<protein>
    <recommendedName>
        <fullName evidence="3">DNA polymerase</fullName>
        <ecNumber evidence="3">2.7.7.7</ecNumber>
    </recommendedName>
</protein>
<reference key="1">
    <citation type="submission" date="1993-08" db="EMBL/GenBank/DDBJ databases">
        <authorList>
            <person name="Stanglmaier M."/>
            <person name="Winnacker E.L."/>
        </authorList>
    </citation>
    <scope>NUCLEOTIDE SEQUENCE [GENOMIC DNA]</scope>
</reference>
<organism>
    <name type="scientific">Human adenovirus E serotype 4</name>
    <name type="common">HAdV-4</name>
    <name type="synonym">Human adenovirus 4</name>
    <dbReference type="NCBI Taxonomy" id="28280"/>
    <lineage>
        <taxon>Viruses</taxon>
        <taxon>Varidnaviria</taxon>
        <taxon>Bamfordvirae</taxon>
        <taxon>Preplasmiviricota</taxon>
        <taxon>Tectiliviricetes</taxon>
        <taxon>Rowavirales</taxon>
        <taxon>Adenoviridae</taxon>
        <taxon>Mastadenovirus</taxon>
        <taxon>Human mastadenovirus E</taxon>
    </lineage>
</organism>
<sequence>MALVQTHGSRGLHPEASDPGRQPSRRRSRQSSPGAVPEPARARRRRAPATTASGSRAAPTARRASSPPLLTMEAKPLPPAKKKRGTVVTPQGHGTLQAIDVATNGAVEIKYHLDLPRALEKLLQVNRAPPLPTDLTPQRLRTLDSSGLRALVLALRPVRAEVWTCLPRGLVSMTTIEAEEGQADHHDVVQHQMQAPRLHFPLKFLVKGTQVQLVQHVHPVQRCEHCGRLYKHKHECSARRRHFYFHHINSHSSNWWQEIQFFPIGSHPRTERLFLTYDVETYTWMGSFGKQLVPFMLVMKLSGDDRLVELALDLALQLKWDRWHGDPRTFYCVTPEKMAVGQQFRQYRDRLQTALAVDLWTSFLRANPHLADWALEQHGLSDPDELTYEELKKLPHVKGRPRFVELYIVGHNINGFDEIVLAAQVINNRAEVPQPFRITRNFMPRAGKILFNDVTFALPNPAYKKRTDFQLWEQGGCDDIDFKHQFLKVMVRDTFALTHTSLRKAAQAYALPVEKGCCAYKAVNQFYMLGSYRADQDGFPLEEYWKDREEFLLNRELWKQKGQLKYDIIQETLDYCALDVLVTAELVAKLQDSYAHFIRDSVGLPHAHFNIFQRPTISSNSHAIFRQIVYRAEKPSRANLGAGLLAPSHELYDYVRATIRGGRCYPTYIGILDEPLYVYDICGMYASALTHPMPWGTPLSPYERALAVREWQASLDDLGTCISYFDPDLLPGIFTIDADPPDELMLDPLPPFCSRKGGRLCWTNEPLRGEVATSVDLITLHNRGWQVRIVPDELTTVFPEWKCVAREYVQLNIAAKERADKEKNQTMRSIAKLLSNALYGSFATKLDNKKIVFSDQMDEGLLKGISAGTVNIKSSSFLETDNLSAEVMPAFEREYLPQHVALLDSDPEDSEDEQRPAPFYTPPAGTPGHVAYTYKPITFLDVDEGDMCLHTLEKVDPLVDNDRYPSHVASFVLAWTRAFVSEWSGFLYDEDRGVPLEDRPIKSVYGDTDSLFVTQRGHELMETRGKKRIKKNGGKLVFDPNQPDLTWLVECETVCAHCGADAYAPESVFLAPKLYALKSLLCPACGQTSKGNVRAKGHAAEALNYELMVNCYLADAQGADRERFSTSRMSLKRTLASAQPGAHPFTVTETTLTRTLRPWKDRTLAALDAHRLAPYSRSRPNPRNEEVCWIEMP</sequence>
<accession>P87503</accession>
<name>DPOL_ADE04</name>
<gene>
    <name evidence="3" type="primary">POL</name>
</gene>
<evidence type="ECO:0000250" key="1">
    <source>
        <dbReference type="UniProtKB" id="P03261"/>
    </source>
</evidence>
<evidence type="ECO:0000250" key="2">
    <source>
        <dbReference type="UniProtKB" id="P04495"/>
    </source>
</evidence>
<evidence type="ECO:0000255" key="3">
    <source>
        <dbReference type="HAMAP-Rule" id="MF_04055"/>
    </source>
</evidence>
<evidence type="ECO:0000256" key="4">
    <source>
        <dbReference type="SAM" id="MobiDB-lite"/>
    </source>
</evidence>
<evidence type="ECO:0000305" key="5"/>